<comment type="function">
    <text evidence="6">Pleiotropic ABC efflux transporter that might be involved in the resistance to azoles such as fluconazole.</text>
</comment>
<comment type="subcellular location">
    <subcellularLocation>
        <location evidence="1">Membrane</location>
        <topology evidence="1">Multi-pass membrane protein</topology>
    </subcellularLocation>
</comment>
<comment type="induction">
    <text evidence="5 6 7 8 9">Azole exposure induces expression via regulation by the transcription factor PDR1 that stimulates gene expression via binding to elements called pleiotropic drug response elements (PDREs) (PubMed:16803598, PubMed:20547810, PubMed:21193550, PubMed:25199772). Expression is highly up-regulated azole-resistant isolates (PubMed:20547810, PubMed:21321146).</text>
</comment>
<comment type="similarity">
    <text evidence="11">Belongs to the ABC transporter superfamily. ABCC family. Conjugate transporter (TC 3.A.1.208) subfamily.</text>
</comment>
<organism>
    <name type="scientific">Candida glabrata (strain ATCC 2001 / BCRC 20586 / JCM 3761 / NBRC 0622 / NRRL Y-65 / CBS 138)</name>
    <name type="common">Yeast</name>
    <name type="synonym">Nakaseomyces glabratus</name>
    <dbReference type="NCBI Taxonomy" id="284593"/>
    <lineage>
        <taxon>Eukaryota</taxon>
        <taxon>Fungi</taxon>
        <taxon>Dikarya</taxon>
        <taxon>Ascomycota</taxon>
        <taxon>Saccharomycotina</taxon>
        <taxon>Saccharomycetes</taxon>
        <taxon>Saccharomycetales</taxon>
        <taxon>Saccharomycetaceae</taxon>
        <taxon>Nakaseomyces</taxon>
    </lineage>
</organism>
<evidence type="ECO:0000255" key="1"/>
<evidence type="ECO:0000255" key="2">
    <source>
        <dbReference type="PROSITE-ProRule" id="PRU00434"/>
    </source>
</evidence>
<evidence type="ECO:0000255" key="3">
    <source>
        <dbReference type="PROSITE-ProRule" id="PRU00441"/>
    </source>
</evidence>
<evidence type="ECO:0000255" key="4">
    <source>
        <dbReference type="PROSITE-ProRule" id="PRU00498"/>
    </source>
</evidence>
<evidence type="ECO:0000269" key="5">
    <source>
    </source>
</evidence>
<evidence type="ECO:0000269" key="6">
    <source>
    </source>
</evidence>
<evidence type="ECO:0000269" key="7">
    <source>
    </source>
</evidence>
<evidence type="ECO:0000269" key="8">
    <source>
    </source>
</evidence>
<evidence type="ECO:0000269" key="9">
    <source>
    </source>
</evidence>
<evidence type="ECO:0000303" key="10">
    <source>
    </source>
</evidence>
<evidence type="ECO:0000305" key="11"/>
<sequence length="1648" mass="186792">MVVEAMSSCQFWYFDDITKYGRIEVLNNYVPTTLVTISILILLHNFFIRFYKYDIKKETPTPSLSLKLSSLNLSESDEEMPLTMHAQHNYGSHPSPSELNTDSSALYDRHFSINNIDSGEVNDPTKYHLIKRNMFEKFRVVIEFVIVAFQLLLHCYLSIEKSNLNGDLQKFHFKPHVLLWTILFTLATLRVLNLNQNNKFVNKYSGNIWLVSFANYTVIFLAHILPFRSALIGHVNDYGSSQYYKSQFWLNLVLMALLLTSPIGNNLPVLYQPQQDRAPSPEPYVSLLTFFSFHWVQPFINKAYKNNSLSHSDLWSLKLEDYSINVMKSFLEFRNRPSMRSSRFGISLLRYFLNLFMFQWCFTTISAFSIFVPTILLKKLLDFIEHKDKGSMNLAWFYVFGMFISRFIVAICDHCNLFLGRRVCVRMKSIIISEIYSKALKRKITKQSKPADENNENDMIKHDEVSPQEVNDTTHVNADEESYSSNLGSIINLMSVDAFKISELCAYLHYFLETAIMLTVSLILLYKVIGTAAFVGILITIIIIPINSKLYAVVGTLQAGNLACTDKRVEKLNESFQAIRIIKYFSWEDKFKEGIMLVREKELALLLKRCMVWCVLAFSWFITPTLITGCTFAYSILIEKKQLTTPVAFTALSLFTLLRDPLDRISDMLSYLIQSKISLDRVQRFLETEETDKYDQLTVDKNGKRLAFENVTLRWDSDKDSFVLRNLDIEFMTGKLNVIVGATGSGKTSILMGLLGEMQLSEGKIIVPSLSPRHEYQSQAGVINDSIAYCSQAAWLLNDTVRNNILFNAPFDQARYDAVVEACSLKRDFQILKAGDSTEIGEKGITLSGGQKQRVSLARALYSSAGHLLLDDCLSAVDSHTALWIYDKCISGPLMEGRTCILVTHNIALTMKNADFVVMIEDGKVKEKGTPIELLAKGLLGEDENMKKSIISRSASSASLKGKSERSLGTTPAPVEIVQDSTPVNDDGKLIEEEGKAMGFVGKEIYKWYIKMYGGWYTIVALASVFTAILCLQITQAWWIRNWTVKRFSDVDESNYNLPASTFIVESRNRVLLTNEAGKKESENQNAGIAKFLVVYCLIGVMSSIIGSIKTFVNSLFGIRASKLIFDSLLDRVLHARVRFFDSTPIGRIMNRFSKDIESIDQEIPPNIQSVFYSAIEVFATLLLISYITPAFFPVAIIIVLGYSIVGFFYLTTSRELKRLDSISKSPIFQHFSETLVGVTTIRAFGDEQRFIKENLSMIDQNSMPFFYLWVVNRWLSFRIDLIGALVIFSSGVFILLNINNIDAGLAGISLTYAISFTEAALWLVRQYSELEMNMNSVERVLEYMNIEQEPLIADPANAVTPPPQWPDSGKVEVNNLSLKYAPHLPYVIKDVTFTIEPLEKVGIVGRTGAGKSTIITALFRFLEADTGSIKLDGVNIANIDLKRLRRSITIIPQDPTLFAGSIRSNLDPYDEYSDEEIFTALKRVNLVSTEEMEASTSEIQSNSSKNVNKFLNLESEIAEGGSNFSQGQRQLMCLARSLLRMPKVILLDEATASIDYNSDAKIQETIRQEFNNSTVLTIAHRLRSIVDYDKILVMDAGEVKEFDHPYSLLLEKKSIFYNMCEDSGELDVLIDLAKKSFISRLNSDSKK</sequence>
<name>YBT1_CANGA</name>
<dbReference type="EMBL" id="CR380949">
    <property type="protein sequence ID" value="CAG58225.1"/>
    <property type="molecule type" value="Genomic_DNA"/>
</dbReference>
<dbReference type="RefSeq" id="XP_445319.1">
    <property type="nucleotide sequence ID" value="XM_445319.1"/>
</dbReference>
<dbReference type="SMR" id="Q6FWS5"/>
<dbReference type="STRING" id="284593.Q6FWS5"/>
<dbReference type="GlyCosmos" id="Q6FWS5">
    <property type="glycosylation" value="13 sites, No reported glycans"/>
</dbReference>
<dbReference type="EnsemblFungi" id="CAGL0C03289g-T">
    <property type="protein sequence ID" value="CAGL0C03289g-T-p1"/>
    <property type="gene ID" value="CAGL0C03289g"/>
</dbReference>
<dbReference type="GeneID" id="2886961"/>
<dbReference type="KEGG" id="cgr:2886961"/>
<dbReference type="CGD" id="CAL0127212">
    <property type="gene designation" value="YBT1"/>
</dbReference>
<dbReference type="VEuPathDB" id="FungiDB:CAGL0C03289g"/>
<dbReference type="eggNOG" id="KOG0054">
    <property type="taxonomic scope" value="Eukaryota"/>
</dbReference>
<dbReference type="HOGENOM" id="CLU_000604_27_6_1"/>
<dbReference type="InParanoid" id="Q6FWS5"/>
<dbReference type="OMA" id="KMWEHVE"/>
<dbReference type="Proteomes" id="UP000002428">
    <property type="component" value="Chromosome C"/>
</dbReference>
<dbReference type="GO" id="GO:0000329">
    <property type="term" value="C:fungal-type vacuole membrane"/>
    <property type="evidence" value="ECO:0007669"/>
    <property type="project" value="EnsemblFungi"/>
</dbReference>
<dbReference type="GO" id="GO:0140359">
    <property type="term" value="F:ABC-type transporter activity"/>
    <property type="evidence" value="ECO:0007669"/>
    <property type="project" value="InterPro"/>
</dbReference>
<dbReference type="GO" id="GO:0005524">
    <property type="term" value="F:ATP binding"/>
    <property type="evidence" value="ECO:0007669"/>
    <property type="project" value="UniProtKB-KW"/>
</dbReference>
<dbReference type="GO" id="GO:0016887">
    <property type="term" value="F:ATP hydrolysis activity"/>
    <property type="evidence" value="ECO:0007669"/>
    <property type="project" value="InterPro"/>
</dbReference>
<dbReference type="GO" id="GO:0010038">
    <property type="term" value="P:response to metal ion"/>
    <property type="evidence" value="ECO:0007669"/>
    <property type="project" value="EnsemblFungi"/>
</dbReference>
<dbReference type="GO" id="GO:1990961">
    <property type="term" value="P:xenobiotic detoxification by transmembrane export across the plasma membrane"/>
    <property type="evidence" value="ECO:0007669"/>
    <property type="project" value="EnsemblFungi"/>
</dbReference>
<dbReference type="CDD" id="cd18596">
    <property type="entry name" value="ABC_6TM_VMR1_D1_like"/>
    <property type="match status" value="1"/>
</dbReference>
<dbReference type="CDD" id="cd18604">
    <property type="entry name" value="ABC_6TM_VMR1_D2_like"/>
    <property type="match status" value="1"/>
</dbReference>
<dbReference type="CDD" id="cd03250">
    <property type="entry name" value="ABCC_MRP_domain1"/>
    <property type="match status" value="1"/>
</dbReference>
<dbReference type="CDD" id="cd03369">
    <property type="entry name" value="ABCC_NFT1"/>
    <property type="match status" value="1"/>
</dbReference>
<dbReference type="FunFam" id="3.40.50.300:FF:000565">
    <property type="entry name" value="ABC bile acid transporter"/>
    <property type="match status" value="1"/>
</dbReference>
<dbReference type="FunFam" id="3.40.50.300:FF:000825">
    <property type="entry name" value="ABC bile acid transporter"/>
    <property type="match status" value="1"/>
</dbReference>
<dbReference type="Gene3D" id="1.20.1560.10">
    <property type="entry name" value="ABC transporter type 1, transmembrane domain"/>
    <property type="match status" value="2"/>
</dbReference>
<dbReference type="Gene3D" id="3.40.50.300">
    <property type="entry name" value="P-loop containing nucleotide triphosphate hydrolases"/>
    <property type="match status" value="2"/>
</dbReference>
<dbReference type="InterPro" id="IPR003593">
    <property type="entry name" value="AAA+_ATPase"/>
</dbReference>
<dbReference type="InterPro" id="IPR011527">
    <property type="entry name" value="ABC1_TM_dom"/>
</dbReference>
<dbReference type="InterPro" id="IPR036640">
    <property type="entry name" value="ABC1_TM_sf"/>
</dbReference>
<dbReference type="InterPro" id="IPR003439">
    <property type="entry name" value="ABC_transporter-like_ATP-bd"/>
</dbReference>
<dbReference type="InterPro" id="IPR017871">
    <property type="entry name" value="ABC_transporter-like_CS"/>
</dbReference>
<dbReference type="InterPro" id="IPR050173">
    <property type="entry name" value="ABC_transporter_C-like"/>
</dbReference>
<dbReference type="InterPro" id="IPR027417">
    <property type="entry name" value="P-loop_NTPase"/>
</dbReference>
<dbReference type="PANTHER" id="PTHR24223:SF353">
    <property type="entry name" value="ABC TRANSPORTER ATP-BINDING PROTEIN_PERMEASE VMR1-RELATED"/>
    <property type="match status" value="1"/>
</dbReference>
<dbReference type="PANTHER" id="PTHR24223">
    <property type="entry name" value="ATP-BINDING CASSETTE SUB-FAMILY C"/>
    <property type="match status" value="1"/>
</dbReference>
<dbReference type="Pfam" id="PF00664">
    <property type="entry name" value="ABC_membrane"/>
    <property type="match status" value="2"/>
</dbReference>
<dbReference type="Pfam" id="PF00005">
    <property type="entry name" value="ABC_tran"/>
    <property type="match status" value="2"/>
</dbReference>
<dbReference type="SMART" id="SM00382">
    <property type="entry name" value="AAA"/>
    <property type="match status" value="2"/>
</dbReference>
<dbReference type="SUPFAM" id="SSF90123">
    <property type="entry name" value="ABC transporter transmembrane region"/>
    <property type="match status" value="2"/>
</dbReference>
<dbReference type="SUPFAM" id="SSF52540">
    <property type="entry name" value="P-loop containing nucleoside triphosphate hydrolases"/>
    <property type="match status" value="2"/>
</dbReference>
<dbReference type="PROSITE" id="PS50929">
    <property type="entry name" value="ABC_TM1F"/>
    <property type="match status" value="2"/>
</dbReference>
<dbReference type="PROSITE" id="PS00211">
    <property type="entry name" value="ABC_TRANSPORTER_1"/>
    <property type="match status" value="2"/>
</dbReference>
<dbReference type="PROSITE" id="PS50893">
    <property type="entry name" value="ABC_TRANSPORTER_2"/>
    <property type="match status" value="2"/>
</dbReference>
<proteinExistence type="evidence at transcript level"/>
<gene>
    <name evidence="10" type="primary">YBT1</name>
    <name type="ordered locus">CAGL0C03289g</name>
</gene>
<keyword id="KW-0067">ATP-binding</keyword>
<keyword id="KW-0325">Glycoprotein</keyword>
<keyword id="KW-0472">Membrane</keyword>
<keyword id="KW-0547">Nucleotide-binding</keyword>
<keyword id="KW-1185">Reference proteome</keyword>
<keyword id="KW-0677">Repeat</keyword>
<keyword id="KW-0812">Transmembrane</keyword>
<keyword id="KW-1133">Transmembrane helix</keyword>
<keyword id="KW-0813">Transport</keyword>
<feature type="chain" id="PRO_0000445275" description="Pleiotropic ABC efflux transporter of multiple drugs YBT1">
    <location>
        <begin position="1"/>
        <end position="1648"/>
    </location>
</feature>
<feature type="transmembrane region" description="Helical" evidence="1">
    <location>
        <begin position="28"/>
        <end position="48"/>
    </location>
</feature>
<feature type="transmembrane region" description="Helical" evidence="1">
    <location>
        <begin position="140"/>
        <end position="160"/>
    </location>
</feature>
<feature type="transmembrane region" description="Helical" evidence="1">
    <location>
        <begin position="175"/>
        <end position="195"/>
    </location>
</feature>
<feature type="transmembrane region" description="Helical" evidence="1">
    <location>
        <begin position="207"/>
        <end position="227"/>
    </location>
</feature>
<feature type="transmembrane region" description="Helical" evidence="1">
    <location>
        <begin position="250"/>
        <end position="270"/>
    </location>
</feature>
<feature type="transmembrane region" description="Helical" evidence="1 3">
    <location>
        <begin position="352"/>
        <end position="372"/>
    </location>
</feature>
<feature type="transmembrane region" description="Helical" evidence="1 3">
    <location>
        <begin position="392"/>
        <end position="412"/>
    </location>
</feature>
<feature type="transmembrane region" description="Helical" evidence="1 3">
    <location>
        <begin position="501"/>
        <end position="521"/>
    </location>
</feature>
<feature type="transmembrane region" description="Helical" evidence="1 3">
    <location>
        <begin position="523"/>
        <end position="543"/>
    </location>
</feature>
<feature type="transmembrane region" description="Helical" evidence="1 3">
    <location>
        <begin position="612"/>
        <end position="632"/>
    </location>
</feature>
<feature type="transmembrane region" description="Helical" evidence="1 3">
    <location>
        <begin position="643"/>
        <end position="662"/>
    </location>
</feature>
<feature type="transmembrane region" description="Helical" evidence="1">
    <location>
        <begin position="1012"/>
        <end position="1032"/>
    </location>
</feature>
<feature type="transmembrane region" description="Helical" evidence="1 3">
    <location>
        <begin position="1089"/>
        <end position="1109"/>
    </location>
</feature>
<feature type="transmembrane region" description="Helical" evidence="1 3">
    <location>
        <begin position="1168"/>
        <end position="1188"/>
    </location>
</feature>
<feature type="transmembrane region" description="Helical" evidence="1 3">
    <location>
        <begin position="1191"/>
        <end position="1211"/>
    </location>
</feature>
<feature type="transmembrane region" description="Helical" evidence="1 3">
    <location>
        <begin position="1282"/>
        <end position="1302"/>
    </location>
</feature>
<feature type="transmembrane region" description="Helical" evidence="1 3">
    <location>
        <begin position="1305"/>
        <end position="1325"/>
    </location>
</feature>
<feature type="domain" description="ABC transmembrane type-1 1" evidence="3">
    <location>
        <begin position="361"/>
        <end position="674"/>
    </location>
</feature>
<feature type="domain" description="ABC transporter 1" evidence="2">
    <location>
        <begin position="706"/>
        <end position="947"/>
    </location>
</feature>
<feature type="domain" description="ABC transmembrane type-1 2" evidence="3">
    <location>
        <begin position="1032"/>
        <end position="1333"/>
    </location>
</feature>
<feature type="domain" description="ABC transporter 2" evidence="2">
    <location>
        <begin position="1372"/>
        <end position="1622"/>
    </location>
</feature>
<feature type="binding site" evidence="2">
    <location>
        <begin position="741"/>
        <end position="748"/>
    </location>
    <ligand>
        <name>ATP</name>
        <dbReference type="ChEBI" id="CHEBI:30616"/>
    </ligand>
</feature>
<feature type="binding site" evidence="2">
    <location>
        <begin position="1406"/>
        <end position="1413"/>
    </location>
    <ligand>
        <name>ATP</name>
        <dbReference type="ChEBI" id="CHEBI:30616"/>
    </ligand>
</feature>
<feature type="glycosylation site" description="N-linked (GlcNAc...) asparagine" evidence="4">
    <location>
        <position position="72"/>
    </location>
</feature>
<feature type="glycosylation site" description="N-linked (GlcNAc...) asparagine" evidence="4">
    <location>
        <position position="306"/>
    </location>
</feature>
<feature type="glycosylation site" description="N-linked (GlcNAc...) asparagine" evidence="4">
    <location>
        <position position="471"/>
    </location>
</feature>
<feature type="glycosylation site" description="N-linked (GlcNAc...) asparagine" evidence="4">
    <location>
        <position position="573"/>
    </location>
</feature>
<feature type="glycosylation site" description="N-linked (GlcNAc...) asparagine" evidence="4">
    <location>
        <position position="710"/>
    </location>
</feature>
<feature type="glycosylation site" description="N-linked (GlcNAc...) asparagine" evidence="4">
    <location>
        <position position="784"/>
    </location>
</feature>
<feature type="glycosylation site" description="N-linked (GlcNAc...) asparagine" evidence="4">
    <location>
        <position position="798"/>
    </location>
</feature>
<feature type="glycosylation site" description="N-linked (GlcNAc...) asparagine" evidence="4">
    <location>
        <position position="1042"/>
    </location>
</feature>
<feature type="glycosylation site" description="N-linked (GlcNAc...) asparagine" evidence="4">
    <location>
        <position position="1255"/>
    </location>
</feature>
<feature type="glycosylation site" description="N-linked (GlcNAc...) asparagine" evidence="4">
    <location>
        <position position="1376"/>
    </location>
</feature>
<feature type="glycosylation site" description="N-linked (GlcNAc...) asparagine" evidence="4">
    <location>
        <position position="1503"/>
    </location>
</feature>
<feature type="glycosylation site" description="N-linked (GlcNAc...) asparagine" evidence="4">
    <location>
        <position position="1524"/>
    </location>
</feature>
<feature type="glycosylation site" description="N-linked (GlcNAc...) asparagine" evidence="4">
    <location>
        <position position="1573"/>
    </location>
</feature>
<protein>
    <recommendedName>
        <fullName evidence="10">Pleiotropic ABC efflux transporter of multiple drugs YBT1</fullName>
    </recommendedName>
</protein>
<accession>Q6FWS5</accession>
<reference key="1">
    <citation type="journal article" date="2004" name="Nature">
        <title>Genome evolution in yeasts.</title>
        <authorList>
            <person name="Dujon B."/>
            <person name="Sherman D."/>
            <person name="Fischer G."/>
            <person name="Durrens P."/>
            <person name="Casaregola S."/>
            <person name="Lafontaine I."/>
            <person name="de Montigny J."/>
            <person name="Marck C."/>
            <person name="Neuveglise C."/>
            <person name="Talla E."/>
            <person name="Goffard N."/>
            <person name="Frangeul L."/>
            <person name="Aigle M."/>
            <person name="Anthouard V."/>
            <person name="Babour A."/>
            <person name="Barbe V."/>
            <person name="Barnay S."/>
            <person name="Blanchin S."/>
            <person name="Beckerich J.-M."/>
            <person name="Beyne E."/>
            <person name="Bleykasten C."/>
            <person name="Boisrame A."/>
            <person name="Boyer J."/>
            <person name="Cattolico L."/>
            <person name="Confanioleri F."/>
            <person name="de Daruvar A."/>
            <person name="Despons L."/>
            <person name="Fabre E."/>
            <person name="Fairhead C."/>
            <person name="Ferry-Dumazet H."/>
            <person name="Groppi A."/>
            <person name="Hantraye F."/>
            <person name="Hennequin C."/>
            <person name="Jauniaux N."/>
            <person name="Joyet P."/>
            <person name="Kachouri R."/>
            <person name="Kerrest A."/>
            <person name="Koszul R."/>
            <person name="Lemaire M."/>
            <person name="Lesur I."/>
            <person name="Ma L."/>
            <person name="Muller H."/>
            <person name="Nicaud J.-M."/>
            <person name="Nikolski M."/>
            <person name="Oztas S."/>
            <person name="Ozier-Kalogeropoulos O."/>
            <person name="Pellenz S."/>
            <person name="Potier S."/>
            <person name="Richard G.-F."/>
            <person name="Straub M.-L."/>
            <person name="Suleau A."/>
            <person name="Swennen D."/>
            <person name="Tekaia F."/>
            <person name="Wesolowski-Louvel M."/>
            <person name="Westhof E."/>
            <person name="Wirth B."/>
            <person name="Zeniou-Meyer M."/>
            <person name="Zivanovic Y."/>
            <person name="Bolotin-Fukuhara M."/>
            <person name="Thierry A."/>
            <person name="Bouchier C."/>
            <person name="Caudron B."/>
            <person name="Scarpelli C."/>
            <person name="Gaillardin C."/>
            <person name="Weissenbach J."/>
            <person name="Wincker P."/>
            <person name="Souciet J.-L."/>
        </authorList>
    </citation>
    <scope>NUCLEOTIDE SEQUENCE [LARGE SCALE GENOMIC DNA]</scope>
    <source>
        <strain>ATCC 2001 / BCRC 20586 / JCM 3761 / NBRC 0622 / NRRL Y-65 / CBS 138</strain>
    </source>
</reference>
<reference key="2">
    <citation type="journal article" date="2006" name="Mol. Microbiol.">
        <title>Pdr1 regulates multidrug resistance in Candida glabrata: gene disruption and genome-wide expression studies.</title>
        <authorList>
            <person name="Vermitsky J.P."/>
            <person name="Earhart K.D."/>
            <person name="Smith W.L."/>
            <person name="Homayouni R."/>
            <person name="Edlind T.D."/>
            <person name="Rogers P.D."/>
        </authorList>
    </citation>
    <scope>INDUCTION</scope>
</reference>
<reference key="3">
    <citation type="journal article" date="2010" name="Antimicrob. Agents Chemother.">
        <title>Microarray and molecular analyses of the azole resistance mechanism in Candida glabrata oropharyngeal isolates.</title>
        <authorList>
            <person name="Tsai H.F."/>
            <person name="Sammons L.R."/>
            <person name="Zhang X."/>
            <person name="Suffis S.D."/>
            <person name="Su Q."/>
            <person name="Myers T.G."/>
            <person name="Marr K.A."/>
            <person name="Bennett J.E."/>
        </authorList>
    </citation>
    <scope>INDUCTION</scope>
    <scope>FUNCTION</scope>
</reference>
<reference key="4">
    <citation type="journal article" date="2011" name="Antimicrob. Agents Chemother.">
        <title>Loss of mitochondrial functions associated with azole resistance in Candida glabrata results in enhanced virulence in mice.</title>
        <authorList>
            <person name="Ferrari S."/>
            <person name="Sanguinetti M."/>
            <person name="De Bernardis F."/>
            <person name="Torelli R."/>
            <person name="Posteraro B."/>
            <person name="Vandeputte P."/>
            <person name="Sanglard D."/>
        </authorList>
    </citation>
    <scope>INDUCTION</scope>
</reference>
<reference key="5">
    <citation type="journal article" date="2011" name="Eukaryot. Cell">
        <title>Genomewide expression profile analysis of the Candida glabrata Pdr1 regulon.</title>
        <authorList>
            <person name="Caudle K.E."/>
            <person name="Barker K.S."/>
            <person name="Wiederhold N.P."/>
            <person name="Xu L."/>
            <person name="Homayouni R."/>
            <person name="Rogers P.D."/>
        </authorList>
    </citation>
    <scope>INDUCTION</scope>
</reference>
<reference key="6">
    <citation type="journal article" date="2014" name="Antimicrob. Agents Chemother.">
        <title>Identification of genomic binding sites for Candida glabrata Pdr1 transcription factor in wild-type and rho0 cells.</title>
        <authorList>
            <person name="Paul S."/>
            <person name="Bair T.B."/>
            <person name="Moye-Rowley W.S."/>
        </authorList>
    </citation>
    <scope>INDUCTION</scope>
</reference>